<comment type="function">
    <text evidence="1 2 10 11">Positive regulator of myogenesis. Acts as a cofactor for myogenic bHLH transcription factors such as MYOD1, and probably MYOG and MYF6. Enhances the DNA-binding activity of the MYOD1:TCF3 isoform E47 complex and may promote formation of a functional MYOD1:TCF3 isoform E47:MEF2A complex involved in myogenesis (PubMed:7954791, PubMed:9234731). Plays a crucial and specific role in the organization of cytosolic structures in cardiomyocytes. Could play a role in mechanical stretch sensing. May be a scaffold protein that promotes the assembly of interacting proteins at Z-line structures. It is essential for calcineurin anchorage to the Z line. Required for stress-induced calcineurin-NFAT activation. The role in regulation of cytoskeleton dynamics by association with CFL2 is reported conflictingly. Proposed to contribute to the maintenance of muscle cell integrity through an actin-based mechanism. Can directly bind to actin filaments, cross-link actin filaments into bundles without polarity selectivity and protect them from dilution- and cofilin-mediated depolymerization; the function seems to involve its self-association. In vitro can inhibit PKC/PRKCA activity. Proposed to be involved in cardiac stress signaling by down-regulating excessive PKC/PRKCA signaling (By similarity).</text>
</comment>
<comment type="subunit">
    <text evidence="1 5 6 7 8 11">Self-associates. Oligomeric in the cytoplasm and monomeric in the nucleus (PubMed:16963613). Homooligomers preferentially form along the actin cytoskeleton (By similarity). Interacts with TCAP, ACTN2 and NRAP (By similarity). Interacts with LDHD, SPTB, MYOD1, MYOG, MYF6. Interacts with GLRX3 (via C-terminus); GLRX3 and calcineurin compete for interaction with CSRP3 (PubMed:10751147, PubMed:12127981, PubMed:18258855, PubMed:9234731). Interacts with CFL2; the stoichiometry influences F-actin depolymerization and possibly two molecules of CFL2 can interact with one molecule of CSRP3 resulting in the highest functional impact; the interaction is stronger with phosphorylated CFL2 (By similarity).</text>
</comment>
<comment type="interaction">
    <interactant intactId="EBI-12502290">
        <id>P50463</id>
    </interactant>
    <interactant intactId="EBI-4405734">
        <id>P10085</id>
        <label>Myod1</label>
    </interactant>
    <organismsDiffer>true</organismsDiffer>
    <experiments>3</experiments>
</comment>
<comment type="interaction">
    <interactant intactId="EBI-12502290">
        <id>P50463</id>
    </interactant>
    <interactant intactId="EBI-514908">
        <id>P11277</id>
        <label>SPTB</label>
    </interactant>
    <organismsDiffer>true</organismsDiffer>
    <experiments>6</experiments>
</comment>
<comment type="subcellular location">
    <subcellularLocation>
        <location evidence="7 9 11">Nucleus</location>
    </subcellularLocation>
    <subcellularLocation>
        <location evidence="7 9 11">Cytoplasm</location>
    </subcellularLocation>
    <subcellularLocation>
        <location>Cytoplasm</location>
        <location>Cytoskeleton</location>
    </subcellularLocation>
    <subcellularLocation>
        <location evidence="2">Cytoplasm</location>
        <location evidence="2">Myofibril</location>
        <location evidence="2">Sarcomere</location>
        <location evidence="2">Z line</location>
    </subcellularLocation>
    <subcellularLocation>
        <location evidence="1">Cytoplasm</location>
        <location evidence="1">Myofibril</location>
        <location evidence="1">Sarcomere</location>
    </subcellularLocation>
    <text evidence="2 9">Nucleocytoplasmic shuttling protein (PubMed:19376126). Mainly cytoplasmic. In the Z line, found associated with GLRX3 (By similarity).</text>
</comment>
<comment type="tissue specificity">
    <text>High in striated muscle and adult heart.</text>
</comment>
<comment type="domain">
    <text evidence="1 5 11">LIM zinc-binding domain 1 is required for self-association. LIM zinc-binding domain 1 and LIM zinc-binding domain 2 both are required for optimal actin-bundling activity (By similarity). LIM zinc-binding domain 1 mediates binding to MYOD1. LIM zinc-binding domain 2 mediates binding to SPTB (PubMed:10751147, PubMed:9234731).</text>
</comment>
<comment type="PTM">
    <text evidence="1">Phosphorylated by PKC/PRKCA.</text>
</comment>
<protein>
    <recommendedName>
        <fullName>Cysteine and glycine-rich protein 3</fullName>
    </recommendedName>
    <alternativeName>
        <fullName>Cysteine-rich protein 3</fullName>
        <shortName>CRP3</shortName>
    </alternativeName>
    <alternativeName>
        <fullName>LIM domain protein, cardiac</fullName>
    </alternativeName>
    <alternativeName>
        <fullName>Muscle LIM protein</fullName>
    </alternativeName>
</protein>
<proteinExistence type="evidence at protein level"/>
<sequence length="194" mass="20803">MPNWGGGAKCGACDKTVYHAEEIQCNGRSFHKTCFHCMACRKALDSTTVAAHESEIYCKVCYGRKYGPKGIGFGQGAGCLSTDTGEHLGLQFQQSPKPARAATTSNPSKFSAKFGESEKCPRCGKSVYAAEKVMGGGKPWHKTCFPCAICGKSLESTNVTDKDGELYCKVCYAKNFGPTGIGFGGLTHQVEKKE</sequence>
<keyword id="KW-0009">Actin-binding</keyword>
<keyword id="KW-0963">Cytoplasm</keyword>
<keyword id="KW-0206">Cytoskeleton</keyword>
<keyword id="KW-0217">Developmental protein</keyword>
<keyword id="KW-0221">Differentiation</keyword>
<keyword id="KW-0440">LIM domain</keyword>
<keyword id="KW-0479">Metal-binding</keyword>
<keyword id="KW-0517">Myogenesis</keyword>
<keyword id="KW-0539">Nucleus</keyword>
<keyword id="KW-0597">Phosphoprotein</keyword>
<keyword id="KW-1185">Reference proteome</keyword>
<keyword id="KW-0677">Repeat</keyword>
<keyword id="KW-0804">Transcription</keyword>
<keyword id="KW-0805">Transcription regulation</keyword>
<keyword id="KW-0862">Zinc</keyword>
<name>CSRP3_RAT</name>
<evidence type="ECO:0000250" key="1">
    <source>
        <dbReference type="UniProtKB" id="P50461"/>
    </source>
</evidence>
<evidence type="ECO:0000250" key="2">
    <source>
        <dbReference type="UniProtKB" id="P50462"/>
    </source>
</evidence>
<evidence type="ECO:0000255" key="3"/>
<evidence type="ECO:0000255" key="4">
    <source>
        <dbReference type="PROSITE-ProRule" id="PRU00125"/>
    </source>
</evidence>
<evidence type="ECO:0000269" key="5">
    <source>
    </source>
</evidence>
<evidence type="ECO:0000269" key="6">
    <source>
    </source>
</evidence>
<evidence type="ECO:0000269" key="7">
    <source>
    </source>
</evidence>
<evidence type="ECO:0000269" key="8">
    <source>
    </source>
</evidence>
<evidence type="ECO:0000269" key="9">
    <source>
    </source>
</evidence>
<evidence type="ECO:0000269" key="10">
    <source>
    </source>
</evidence>
<evidence type="ECO:0000269" key="11">
    <source>
    </source>
</evidence>
<evidence type="ECO:0000305" key="12">
    <source>
    </source>
</evidence>
<evidence type="ECO:0007744" key="13">
    <source>
    </source>
</evidence>
<reference key="1">
    <citation type="journal article" date="1994" name="Cell">
        <title>Muscle LIM protein, a novel essential regulator of myogenesis, promotes myogenic differentiation.</title>
        <authorList>
            <person name="Arber S."/>
            <person name="Halder G."/>
            <person name="Caroni P."/>
        </authorList>
    </citation>
    <scope>NUCLEOTIDE SEQUENCE [MRNA]</scope>
    <scope>FUNCTION</scope>
    <source>
        <strain>Lewis</strain>
        <tissue>Skeletal muscle</tissue>
    </source>
</reference>
<reference key="2">
    <citation type="journal article" date="1997" name="Mol. Cell. Biol.">
        <title>Muscle LIM protein promotes myogenesis by enhancing the activity of MyoD.</title>
        <authorList>
            <person name="Kong Y."/>
            <person name="Flick M.J."/>
            <person name="Kudla A.J."/>
            <person name="Konieczny S.F."/>
        </authorList>
    </citation>
    <scope>FUNCTION</scope>
    <scope>INTERACTION WITH MYOD1; MYOG AND MYF6</scope>
    <scope>SUBCELLULAR LOCATION</scope>
</reference>
<reference key="3">
    <citation type="journal article" date="2000" name="J. Cell Sci.">
        <title>The muscle regulatory and structural protein MLP is a cytoskeletal binding partner of betaI-spectrin.</title>
        <authorList>
            <person name="Flick M.J."/>
            <person name="Konieczny S.F."/>
        </authorList>
    </citation>
    <scope>INTERACTION WITH SPTB</scope>
</reference>
<reference key="4">
    <citation type="journal article" date="2002" name="Biochem. Biophys. Res. Commun.">
        <title>Identification of putative mammalian D-lactate dehydrogenase enzymes.</title>
        <authorList>
            <person name="Flick M.J."/>
            <person name="Konieczny S.F."/>
        </authorList>
    </citation>
    <scope>INTERACTION WITH LDHD</scope>
</reference>
<reference key="5">
    <citation type="journal article" date="2007" name="Am. J. Physiol.">
        <title>Cardiac dysfunction and heart failure are associated with abnormalities in the subcellular distribution and amounts of oligomeric muscle LIM protein.</title>
        <authorList>
            <person name="Boateng S.Y."/>
            <person name="Belin R.J."/>
            <person name="Geenen D.L."/>
            <person name="Margulies K.B."/>
            <person name="Martin J.L."/>
            <person name="Hoshijima M."/>
            <person name="de Tombe P.P."/>
            <person name="Russell B."/>
        </authorList>
    </citation>
    <scope>SUBCELLULAR LOCATION</scope>
    <scope>SUBUNIT</scope>
</reference>
<reference key="6">
    <citation type="journal article" date="2008" name="Circ. Res.">
        <title>PICOT attenuates cardiac hypertrophy by disrupting calcineurin-NFAT signaling.</title>
        <authorList>
            <person name="Jeong D."/>
            <person name="Kim J.M."/>
            <person name="Cha H."/>
            <person name="Oh J.G."/>
            <person name="Park J."/>
            <person name="Yun S.H."/>
            <person name="Ju E.S."/>
            <person name="Jeon E.S."/>
            <person name="Hajjar R.J."/>
            <person name="Park W.J."/>
        </authorList>
    </citation>
    <scope>INTERACTION WITH GLRX3</scope>
</reference>
<reference key="7">
    <citation type="journal article" date="2009" name="J. Mol. Cell. Cardiol.">
        <title>Myocyte remodeling in response to hypertrophic stimuli requires nucleocytoplasmic shuttling of muscle LIM protein.</title>
        <authorList>
            <person name="Boateng S.Y."/>
            <person name="Senyo S.E."/>
            <person name="Qi L."/>
            <person name="Goldspink P.H."/>
            <person name="Russell B."/>
        </authorList>
    </citation>
    <scope>SUBCELLULAR LOCATION</scope>
</reference>
<reference key="8">
    <citation type="journal article" date="2012" name="Nat. Commun.">
        <title>Quantitative maps of protein phosphorylation sites across 14 different rat organs and tissues.</title>
        <authorList>
            <person name="Lundby A."/>
            <person name="Secher A."/>
            <person name="Lage K."/>
            <person name="Nordsborg N.B."/>
            <person name="Dmytriyev A."/>
            <person name="Lundby C."/>
            <person name="Olsen J.V."/>
        </authorList>
    </citation>
    <scope>PHOSPHORYLATION [LARGE SCALE ANALYSIS] AT SER-153</scope>
    <scope>IDENTIFICATION BY MASS SPECTROMETRY [LARGE SCALE ANALYSIS]</scope>
</reference>
<dbReference type="EMBL" id="X81193">
    <property type="protein sequence ID" value="CAA57065.1"/>
    <property type="molecule type" value="mRNA"/>
</dbReference>
<dbReference type="PIR" id="A55099">
    <property type="entry name" value="A55099"/>
</dbReference>
<dbReference type="RefSeq" id="NP_476485.1">
    <property type="nucleotide sequence ID" value="NM_057144.1"/>
</dbReference>
<dbReference type="SMR" id="P50463"/>
<dbReference type="FunCoup" id="P50463">
    <property type="interactions" value="11"/>
</dbReference>
<dbReference type="IntAct" id="P50463">
    <property type="interactions" value="5"/>
</dbReference>
<dbReference type="STRING" id="10116.ENSRNOP00000019310"/>
<dbReference type="iPTMnet" id="P50463"/>
<dbReference type="PhosphoSitePlus" id="P50463"/>
<dbReference type="PaxDb" id="10116-ENSRNOP00000019310"/>
<dbReference type="GeneID" id="117505"/>
<dbReference type="KEGG" id="rno:117505"/>
<dbReference type="UCSC" id="RGD:71092">
    <property type="organism name" value="rat"/>
</dbReference>
<dbReference type="AGR" id="RGD:71092"/>
<dbReference type="CTD" id="8048"/>
<dbReference type="RGD" id="71092">
    <property type="gene designation" value="Csrp3"/>
</dbReference>
<dbReference type="eggNOG" id="KOG1700">
    <property type="taxonomic scope" value="Eukaryota"/>
</dbReference>
<dbReference type="InParanoid" id="P50463"/>
<dbReference type="OrthoDB" id="1679758at2759"/>
<dbReference type="PhylomeDB" id="P50463"/>
<dbReference type="PRO" id="PR:P50463"/>
<dbReference type="Proteomes" id="UP000002494">
    <property type="component" value="Unplaced"/>
</dbReference>
<dbReference type="GO" id="GO:0005737">
    <property type="term" value="C:cytoplasm"/>
    <property type="evidence" value="ECO:0000314"/>
    <property type="project" value="MGI"/>
</dbReference>
<dbReference type="GO" id="GO:0005856">
    <property type="term" value="C:cytoskeleton"/>
    <property type="evidence" value="ECO:0007669"/>
    <property type="project" value="UniProtKB-SubCell"/>
</dbReference>
<dbReference type="GO" id="GO:0005634">
    <property type="term" value="C:nucleus"/>
    <property type="evidence" value="ECO:0000314"/>
    <property type="project" value="MGI"/>
</dbReference>
<dbReference type="GO" id="GO:0030018">
    <property type="term" value="C:Z disc"/>
    <property type="evidence" value="ECO:0000314"/>
    <property type="project" value="BHF-UCL"/>
</dbReference>
<dbReference type="GO" id="GO:0003779">
    <property type="term" value="F:actin binding"/>
    <property type="evidence" value="ECO:0007669"/>
    <property type="project" value="UniProtKB-KW"/>
</dbReference>
<dbReference type="GO" id="GO:0042805">
    <property type="term" value="F:actinin binding"/>
    <property type="evidence" value="ECO:0000266"/>
    <property type="project" value="RGD"/>
</dbReference>
<dbReference type="GO" id="GO:0042802">
    <property type="term" value="F:identical protein binding"/>
    <property type="evidence" value="ECO:0000266"/>
    <property type="project" value="RGD"/>
</dbReference>
<dbReference type="GO" id="GO:0046872">
    <property type="term" value="F:metal ion binding"/>
    <property type="evidence" value="ECO:0007669"/>
    <property type="project" value="UniProtKB-KW"/>
</dbReference>
<dbReference type="GO" id="GO:0043426">
    <property type="term" value="F:MRF binding"/>
    <property type="evidence" value="ECO:0000314"/>
    <property type="project" value="MGI"/>
</dbReference>
<dbReference type="GO" id="GO:0061629">
    <property type="term" value="F:RNA polymerase II-specific DNA-binding transcription factor binding"/>
    <property type="evidence" value="ECO:0000353"/>
    <property type="project" value="MGI"/>
</dbReference>
<dbReference type="GO" id="GO:0008307">
    <property type="term" value="F:structural constituent of muscle"/>
    <property type="evidence" value="ECO:0000266"/>
    <property type="project" value="RGD"/>
</dbReference>
<dbReference type="GO" id="GO:0031433">
    <property type="term" value="F:telethonin binding"/>
    <property type="evidence" value="ECO:0000266"/>
    <property type="project" value="RGD"/>
</dbReference>
<dbReference type="GO" id="GO:0001974">
    <property type="term" value="P:blood vessel remodeling"/>
    <property type="evidence" value="ECO:0000270"/>
    <property type="project" value="RGD"/>
</dbReference>
<dbReference type="GO" id="GO:0060048">
    <property type="term" value="P:cardiac muscle contraction"/>
    <property type="evidence" value="ECO:0000266"/>
    <property type="project" value="RGD"/>
</dbReference>
<dbReference type="GO" id="GO:0003300">
    <property type="term" value="P:cardiac muscle hypertrophy"/>
    <property type="evidence" value="ECO:0000266"/>
    <property type="project" value="RGD"/>
</dbReference>
<dbReference type="GO" id="GO:0048738">
    <property type="term" value="P:cardiac muscle tissue development"/>
    <property type="evidence" value="ECO:0000266"/>
    <property type="project" value="RGD"/>
</dbReference>
<dbReference type="GO" id="GO:0055003">
    <property type="term" value="P:cardiac myofibril assembly"/>
    <property type="evidence" value="ECO:0000266"/>
    <property type="project" value="RGD"/>
</dbReference>
<dbReference type="GO" id="GO:0035995">
    <property type="term" value="P:detection of muscle stretch"/>
    <property type="evidence" value="ECO:0000266"/>
    <property type="project" value="RGD"/>
</dbReference>
<dbReference type="GO" id="GO:0042593">
    <property type="term" value="P:glucose homeostasis"/>
    <property type="evidence" value="ECO:0000266"/>
    <property type="project" value="RGD"/>
</dbReference>
<dbReference type="GO" id="GO:0007507">
    <property type="term" value="P:heart development"/>
    <property type="evidence" value="ECO:0000266"/>
    <property type="project" value="RGD"/>
</dbReference>
<dbReference type="GO" id="GO:0006954">
    <property type="term" value="P:inflammatory response"/>
    <property type="evidence" value="ECO:0000266"/>
    <property type="project" value="RGD"/>
</dbReference>
<dbReference type="GO" id="GO:0008286">
    <property type="term" value="P:insulin receptor signaling pathway"/>
    <property type="evidence" value="ECO:0000266"/>
    <property type="project" value="RGD"/>
</dbReference>
<dbReference type="GO" id="GO:0006874">
    <property type="term" value="P:intracellular calcium ion homeostasis"/>
    <property type="evidence" value="ECO:0000266"/>
    <property type="project" value="RGD"/>
</dbReference>
<dbReference type="GO" id="GO:0046716">
    <property type="term" value="P:muscle cell cellular homeostasis"/>
    <property type="evidence" value="ECO:0000266"/>
    <property type="project" value="RGD"/>
</dbReference>
<dbReference type="GO" id="GO:0007517">
    <property type="term" value="P:muscle organ development"/>
    <property type="evidence" value="ECO:0007669"/>
    <property type="project" value="UniProtKB-KW"/>
</dbReference>
<dbReference type="GO" id="GO:0060537">
    <property type="term" value="P:muscle tissue development"/>
    <property type="evidence" value="ECO:0000318"/>
    <property type="project" value="GO_Central"/>
</dbReference>
<dbReference type="GO" id="GO:0141212">
    <property type="term" value="P:phospholipase C/protein kinase C signal transduction"/>
    <property type="evidence" value="ECO:0000266"/>
    <property type="project" value="RGD"/>
</dbReference>
<dbReference type="GO" id="GO:0051091">
    <property type="term" value="P:positive regulation of DNA-binding transcription factor activity"/>
    <property type="evidence" value="ECO:0000314"/>
    <property type="project" value="MGI"/>
</dbReference>
<dbReference type="GO" id="GO:0010831">
    <property type="term" value="P:positive regulation of myotube differentiation"/>
    <property type="evidence" value="ECO:0000314"/>
    <property type="project" value="MGI"/>
</dbReference>
<dbReference type="GO" id="GO:0045944">
    <property type="term" value="P:positive regulation of transcription by RNA polymerase II"/>
    <property type="evidence" value="ECO:0000266"/>
    <property type="project" value="RGD"/>
</dbReference>
<dbReference type="GO" id="GO:0033365">
    <property type="term" value="P:protein localization to organelle"/>
    <property type="evidence" value="ECO:0000266"/>
    <property type="project" value="RGD"/>
</dbReference>
<dbReference type="GO" id="GO:1903076">
    <property type="term" value="P:regulation of protein localization to plasma membrane"/>
    <property type="evidence" value="ECO:0000266"/>
    <property type="project" value="RGD"/>
</dbReference>
<dbReference type="GO" id="GO:0002026">
    <property type="term" value="P:regulation of the force of heart contraction"/>
    <property type="evidence" value="ECO:0000266"/>
    <property type="project" value="RGD"/>
</dbReference>
<dbReference type="GO" id="GO:0045214">
    <property type="term" value="P:sarcomere organization"/>
    <property type="evidence" value="ECO:0000318"/>
    <property type="project" value="GO_Central"/>
</dbReference>
<dbReference type="GO" id="GO:0033292">
    <property type="term" value="P:T-tubule organization"/>
    <property type="evidence" value="ECO:0000266"/>
    <property type="project" value="RGD"/>
</dbReference>
<dbReference type="CDD" id="cd09481">
    <property type="entry name" value="LIM1_CRP3"/>
    <property type="match status" value="1"/>
</dbReference>
<dbReference type="FunFam" id="2.10.110.10:FF:000001">
    <property type="entry name" value="Cysteine and glycine-rich protein 1"/>
    <property type="match status" value="2"/>
</dbReference>
<dbReference type="Gene3D" id="2.10.110.10">
    <property type="entry name" value="Cysteine Rich Protein"/>
    <property type="match status" value="2"/>
</dbReference>
<dbReference type="InterPro" id="IPR001781">
    <property type="entry name" value="Znf_LIM"/>
</dbReference>
<dbReference type="PANTHER" id="PTHR24215:SF1">
    <property type="entry name" value="CYSTEINE AND GLYCINE-RICH PROTEIN 3"/>
    <property type="match status" value="1"/>
</dbReference>
<dbReference type="PANTHER" id="PTHR24215">
    <property type="entry name" value="RHO-GTPASE-ACTIVATING PROTEIN LRG1"/>
    <property type="match status" value="1"/>
</dbReference>
<dbReference type="Pfam" id="PF00412">
    <property type="entry name" value="LIM"/>
    <property type="match status" value="2"/>
</dbReference>
<dbReference type="SMART" id="SM00132">
    <property type="entry name" value="LIM"/>
    <property type="match status" value="2"/>
</dbReference>
<dbReference type="SUPFAM" id="SSF57716">
    <property type="entry name" value="Glucocorticoid receptor-like (DNA-binding domain)"/>
    <property type="match status" value="4"/>
</dbReference>
<dbReference type="PROSITE" id="PS00478">
    <property type="entry name" value="LIM_DOMAIN_1"/>
    <property type="match status" value="2"/>
</dbReference>
<dbReference type="PROSITE" id="PS50023">
    <property type="entry name" value="LIM_DOMAIN_2"/>
    <property type="match status" value="2"/>
</dbReference>
<gene>
    <name type="primary">Csrp3</name>
    <name type="synonym">Clp</name>
    <name type="synonym">Mlp</name>
</gene>
<organism>
    <name type="scientific">Rattus norvegicus</name>
    <name type="common">Rat</name>
    <dbReference type="NCBI Taxonomy" id="10116"/>
    <lineage>
        <taxon>Eukaryota</taxon>
        <taxon>Metazoa</taxon>
        <taxon>Chordata</taxon>
        <taxon>Craniata</taxon>
        <taxon>Vertebrata</taxon>
        <taxon>Euteleostomi</taxon>
        <taxon>Mammalia</taxon>
        <taxon>Eutheria</taxon>
        <taxon>Euarchontoglires</taxon>
        <taxon>Glires</taxon>
        <taxon>Rodentia</taxon>
        <taxon>Myomorpha</taxon>
        <taxon>Muroidea</taxon>
        <taxon>Muridae</taxon>
        <taxon>Murinae</taxon>
        <taxon>Rattus</taxon>
    </lineage>
</organism>
<feature type="chain" id="PRO_0000075729" description="Cysteine and glycine-rich protein 3">
    <location>
        <begin position="1"/>
        <end position="194"/>
    </location>
</feature>
<feature type="domain" description="LIM zinc-binding 1" evidence="4">
    <location>
        <begin position="10"/>
        <end position="61"/>
    </location>
</feature>
<feature type="domain" description="LIM zinc-binding 2" evidence="4">
    <location>
        <begin position="120"/>
        <end position="171"/>
    </location>
</feature>
<feature type="region of interest" description="Interaction with TCAP" evidence="1">
    <location>
        <begin position="1"/>
        <end position="5"/>
    </location>
</feature>
<feature type="region of interest" description="Interaction with CLF2" evidence="1">
    <location>
        <begin position="94"/>
        <end position="105"/>
    </location>
</feature>
<feature type="short sequence motif" description="Nuclear localization signal" evidence="3 12">
    <location>
        <begin position="64"/>
        <end position="69"/>
    </location>
</feature>
<feature type="modified residue" description="Phosphoserine" evidence="2">
    <location>
        <position position="95"/>
    </location>
</feature>
<feature type="modified residue" description="Phosphoserine" evidence="2">
    <location>
        <position position="111"/>
    </location>
</feature>
<feature type="modified residue" description="Phosphoserine" evidence="13">
    <location>
        <position position="153"/>
    </location>
</feature>
<accession>P50463</accession>